<sequence length="332" mass="37570">MPFWYSNSKLIWLLSPFSLLFWLISQLRHALFCLGIKSSYRAPKPVIIVGNLSVGGNGKTPVVVWLVEELKKRGLRVGVISRGYGSKSKTYPLFVTENTRPIEGGDEPVLIAKRTNAPVVISPNRQQAIELLLSQAECDIIVSDDGLQHYKLQRDLEIVVMDAERALGNGFVLPAGPLRELPSRLKSVDFVITNGGKNQYSDAVMYLVPHFAINLKTNEKRQLKEFQSGVAIAGIGNPQRFFTMLEKLGIQLERTQAFQDHQHFEASQLEKLAENQPLFMTEKDAVKCQSFANDNWWYVPVDAEIIEAEKQCENLPHFWDKIDKLVAQYRNG</sequence>
<proteinExistence type="inferred from homology"/>
<name>LPXK_HAEI8</name>
<organism>
    <name type="scientific">Haemophilus influenzae (strain 86-028NP)</name>
    <dbReference type="NCBI Taxonomy" id="281310"/>
    <lineage>
        <taxon>Bacteria</taxon>
        <taxon>Pseudomonadati</taxon>
        <taxon>Pseudomonadota</taxon>
        <taxon>Gammaproteobacteria</taxon>
        <taxon>Pasteurellales</taxon>
        <taxon>Pasteurellaceae</taxon>
        <taxon>Haemophilus</taxon>
    </lineage>
</organism>
<reference key="1">
    <citation type="journal article" date="2005" name="J. Bacteriol.">
        <title>Genomic sequence of an otitis media isolate of nontypeable Haemophilus influenzae: comparative study with H. influenzae serotype d, strain KW20.</title>
        <authorList>
            <person name="Harrison A."/>
            <person name="Dyer D.W."/>
            <person name="Gillaspy A."/>
            <person name="Ray W.C."/>
            <person name="Mungur R."/>
            <person name="Carson M.B."/>
            <person name="Zhong H."/>
            <person name="Gipson J."/>
            <person name="Gipson M."/>
            <person name="Johnson L.S."/>
            <person name="Lewis L."/>
            <person name="Bakaletz L.O."/>
            <person name="Munson R.S. Jr."/>
        </authorList>
    </citation>
    <scope>NUCLEOTIDE SEQUENCE [LARGE SCALE GENOMIC DNA]</scope>
    <source>
        <strain>86-028NP</strain>
    </source>
</reference>
<feature type="chain" id="PRO_0000229958" description="Tetraacyldisaccharide 4'-kinase">
    <location>
        <begin position="1"/>
        <end position="332"/>
    </location>
</feature>
<feature type="binding site" evidence="1">
    <location>
        <begin position="53"/>
        <end position="60"/>
    </location>
    <ligand>
        <name>ATP</name>
        <dbReference type="ChEBI" id="CHEBI:30616"/>
    </ligand>
</feature>
<protein>
    <recommendedName>
        <fullName evidence="1">Tetraacyldisaccharide 4'-kinase</fullName>
        <ecNumber evidence="1">2.7.1.130</ecNumber>
    </recommendedName>
    <alternativeName>
        <fullName evidence="1">Lipid A 4'-kinase</fullName>
    </alternativeName>
</protein>
<evidence type="ECO:0000255" key="1">
    <source>
        <dbReference type="HAMAP-Rule" id="MF_00409"/>
    </source>
</evidence>
<dbReference type="EC" id="2.7.1.130" evidence="1"/>
<dbReference type="EMBL" id="CP000057">
    <property type="protein sequence ID" value="AAX87062.1"/>
    <property type="molecule type" value="Genomic_DNA"/>
</dbReference>
<dbReference type="RefSeq" id="WP_011271802.1">
    <property type="nucleotide sequence ID" value="NC_007146.2"/>
</dbReference>
<dbReference type="SMR" id="Q4QPI5"/>
<dbReference type="KEGG" id="hit:NTHI0069"/>
<dbReference type="HOGENOM" id="CLU_038816_2_0_6"/>
<dbReference type="UniPathway" id="UPA00359">
    <property type="reaction ID" value="UER00482"/>
</dbReference>
<dbReference type="Proteomes" id="UP000002525">
    <property type="component" value="Chromosome"/>
</dbReference>
<dbReference type="GO" id="GO:0005886">
    <property type="term" value="C:plasma membrane"/>
    <property type="evidence" value="ECO:0007669"/>
    <property type="project" value="TreeGrafter"/>
</dbReference>
<dbReference type="GO" id="GO:0005524">
    <property type="term" value="F:ATP binding"/>
    <property type="evidence" value="ECO:0007669"/>
    <property type="project" value="UniProtKB-UniRule"/>
</dbReference>
<dbReference type="GO" id="GO:0009029">
    <property type="term" value="F:tetraacyldisaccharide 4'-kinase activity"/>
    <property type="evidence" value="ECO:0007669"/>
    <property type="project" value="UniProtKB-UniRule"/>
</dbReference>
<dbReference type="GO" id="GO:0009245">
    <property type="term" value="P:lipid A biosynthetic process"/>
    <property type="evidence" value="ECO:0007669"/>
    <property type="project" value="UniProtKB-UniRule"/>
</dbReference>
<dbReference type="GO" id="GO:0009244">
    <property type="term" value="P:lipopolysaccharide core region biosynthetic process"/>
    <property type="evidence" value="ECO:0007669"/>
    <property type="project" value="TreeGrafter"/>
</dbReference>
<dbReference type="HAMAP" id="MF_00409">
    <property type="entry name" value="LpxK"/>
    <property type="match status" value="1"/>
</dbReference>
<dbReference type="InterPro" id="IPR003758">
    <property type="entry name" value="LpxK"/>
</dbReference>
<dbReference type="InterPro" id="IPR027417">
    <property type="entry name" value="P-loop_NTPase"/>
</dbReference>
<dbReference type="NCBIfam" id="TIGR00682">
    <property type="entry name" value="lpxK"/>
    <property type="match status" value="1"/>
</dbReference>
<dbReference type="PANTHER" id="PTHR42724">
    <property type="entry name" value="TETRAACYLDISACCHARIDE 4'-KINASE"/>
    <property type="match status" value="1"/>
</dbReference>
<dbReference type="PANTHER" id="PTHR42724:SF1">
    <property type="entry name" value="TETRAACYLDISACCHARIDE 4'-KINASE, MITOCHONDRIAL-RELATED"/>
    <property type="match status" value="1"/>
</dbReference>
<dbReference type="Pfam" id="PF02606">
    <property type="entry name" value="LpxK"/>
    <property type="match status" value="1"/>
</dbReference>
<dbReference type="SUPFAM" id="SSF52540">
    <property type="entry name" value="P-loop containing nucleoside triphosphate hydrolases"/>
    <property type="match status" value="1"/>
</dbReference>
<comment type="function">
    <text evidence="1">Transfers the gamma-phosphate of ATP to the 4'-position of a tetraacyldisaccharide 1-phosphate intermediate (termed DS-1-P) to form tetraacyldisaccharide 1,4'-bis-phosphate (lipid IVA).</text>
</comment>
<comment type="catalytic activity">
    <reaction evidence="1">
        <text>a lipid A disaccharide + ATP = a lipid IVA + ADP + H(+)</text>
        <dbReference type="Rhea" id="RHEA:67840"/>
        <dbReference type="ChEBI" id="CHEBI:15378"/>
        <dbReference type="ChEBI" id="CHEBI:30616"/>
        <dbReference type="ChEBI" id="CHEBI:176343"/>
        <dbReference type="ChEBI" id="CHEBI:176425"/>
        <dbReference type="ChEBI" id="CHEBI:456216"/>
        <dbReference type="EC" id="2.7.1.130"/>
    </reaction>
</comment>
<comment type="pathway">
    <text evidence="1">Glycolipid biosynthesis; lipid IV(A) biosynthesis; lipid IV(A) from (3R)-3-hydroxytetradecanoyl-[acyl-carrier-protein] and UDP-N-acetyl-alpha-D-glucosamine: step 6/6.</text>
</comment>
<comment type="similarity">
    <text evidence="1">Belongs to the LpxK family.</text>
</comment>
<accession>Q4QPI5</accession>
<gene>
    <name evidence="1" type="primary">lpxK</name>
    <name type="ordered locus">NTHI0069</name>
</gene>
<keyword id="KW-0067">ATP-binding</keyword>
<keyword id="KW-0418">Kinase</keyword>
<keyword id="KW-0441">Lipid A biosynthesis</keyword>
<keyword id="KW-0444">Lipid biosynthesis</keyword>
<keyword id="KW-0443">Lipid metabolism</keyword>
<keyword id="KW-0547">Nucleotide-binding</keyword>
<keyword id="KW-0808">Transferase</keyword>